<keyword id="KW-0119">Carbohydrate metabolism</keyword>
<keyword id="KW-0136">Cellulose degradation</keyword>
<keyword id="KW-0186">Copper</keyword>
<keyword id="KW-1015">Disulfide bond</keyword>
<keyword id="KW-0325">Glycoprotein</keyword>
<keyword id="KW-0479">Metal-binding</keyword>
<keyword id="KW-0503">Monooxygenase</keyword>
<keyword id="KW-0560">Oxidoreductase</keyword>
<keyword id="KW-0624">Polysaccharide degradation</keyword>
<keyword id="KW-0964">Secreted</keyword>
<keyword id="KW-0732">Signal</keyword>
<proteinExistence type="evidence at protein level"/>
<evidence type="ECO:0000250" key="1">
    <source>
        <dbReference type="UniProtKB" id="A0A5J6BJN2"/>
    </source>
</evidence>
<evidence type="ECO:0000250" key="2">
    <source>
        <dbReference type="UniProtKB" id="Q1K8B6"/>
    </source>
</evidence>
<evidence type="ECO:0000250" key="3">
    <source>
        <dbReference type="UniProtKB" id="Q7Z9M7"/>
    </source>
</evidence>
<evidence type="ECO:0000255" key="4"/>
<evidence type="ECO:0000255" key="5">
    <source>
        <dbReference type="PROSITE-ProRule" id="PRU00498"/>
    </source>
</evidence>
<evidence type="ECO:0000303" key="6">
    <source>
    </source>
</evidence>
<evidence type="ECO:0000305" key="7"/>
<evidence type="ECO:0000305" key="8">
    <source>
    </source>
</evidence>
<protein>
    <recommendedName>
        <fullName evidence="6">AA9 family lytic polysaccharide monooxygenase G</fullName>
        <shortName evidence="6">AA9G</shortName>
        <shortName evidence="6">LPMO9G</shortName>
        <ecNumber evidence="3">1.14.99.56</ecNumber>
    </recommendedName>
    <alternativeName>
        <fullName evidence="7">Cellulase LPMO9G</fullName>
    </alternativeName>
    <alternativeName>
        <fullName evidence="7">Endo-beta-1,4-glucanase LPMO9G</fullName>
        <shortName evidence="7">Endoglucanase LPMO9G</shortName>
    </alternativeName>
    <alternativeName>
        <fullName evidence="7">Glycosyl hydrolase 61 family protein LPMO9G</fullName>
    </alternativeName>
</protein>
<reference key="1">
    <citation type="journal article" date="2019" name="Appl. Environ. Microbiol.">
        <title>Specific xylan activity revealed for AA9 lytic polysaccharide monooxygenases of the thermophilic fungus Malbranchea cinnamomea by functional characterization.</title>
        <authorList>
            <person name="Huettner S."/>
            <person name="Varnai A."/>
            <person name="Petrovic D.M."/>
            <person name="Bach C.X."/>
            <person name="Kim Anh D.T."/>
            <person name="Thanh V.N."/>
            <person name="Eijsink V.G.H."/>
            <person name="Larsbrink J."/>
            <person name="Olsson L."/>
        </authorList>
    </citation>
    <scope>NUCLEOTIDE SEQUENCE [GENOMIC DNA]</scope>
    <scope>FUNCTION</scope>
    <scope>CATALYTIC ACTIVITY</scope>
    <source>
        <strain>FCH 10.5</strain>
    </source>
</reference>
<dbReference type="EC" id="1.14.99.56" evidence="3"/>
<dbReference type="EMBL" id="MK135888">
    <property type="protein sequence ID" value="QDV60871.1"/>
    <property type="molecule type" value="Genomic_DNA"/>
</dbReference>
<dbReference type="SMR" id="A0A5J6BJP2"/>
<dbReference type="GO" id="GO:0005576">
    <property type="term" value="C:extracellular region"/>
    <property type="evidence" value="ECO:0007669"/>
    <property type="project" value="UniProtKB-SubCell"/>
</dbReference>
<dbReference type="GO" id="GO:0046872">
    <property type="term" value="F:metal ion binding"/>
    <property type="evidence" value="ECO:0007669"/>
    <property type="project" value="UniProtKB-KW"/>
</dbReference>
<dbReference type="GO" id="GO:0004497">
    <property type="term" value="F:monooxygenase activity"/>
    <property type="evidence" value="ECO:0007669"/>
    <property type="project" value="UniProtKB-KW"/>
</dbReference>
<dbReference type="GO" id="GO:0030245">
    <property type="term" value="P:cellulose catabolic process"/>
    <property type="evidence" value="ECO:0007669"/>
    <property type="project" value="UniProtKB-KW"/>
</dbReference>
<dbReference type="CDD" id="cd21175">
    <property type="entry name" value="LPMO_AA9"/>
    <property type="match status" value="1"/>
</dbReference>
<dbReference type="Gene3D" id="2.70.50.70">
    <property type="match status" value="1"/>
</dbReference>
<dbReference type="InterPro" id="IPR049892">
    <property type="entry name" value="AA9"/>
</dbReference>
<dbReference type="InterPro" id="IPR005103">
    <property type="entry name" value="AA9_LPMO"/>
</dbReference>
<dbReference type="PANTHER" id="PTHR33353:SF34">
    <property type="entry name" value="ENDO-BETA-1,4-GLUCANASE D"/>
    <property type="match status" value="1"/>
</dbReference>
<dbReference type="PANTHER" id="PTHR33353">
    <property type="entry name" value="PUTATIVE (AFU_ORTHOLOGUE AFUA_1G12560)-RELATED"/>
    <property type="match status" value="1"/>
</dbReference>
<dbReference type="Pfam" id="PF03443">
    <property type="entry name" value="AA9"/>
    <property type="match status" value="1"/>
</dbReference>
<name>LP9G_MALCI</name>
<feature type="signal peptide" evidence="4">
    <location>
        <begin position="1"/>
        <end position="21"/>
    </location>
</feature>
<feature type="chain" id="PRO_5023905823" description="AA9 family lytic polysaccharide monooxygenase G">
    <location>
        <begin position="22"/>
        <end position="248"/>
    </location>
</feature>
<feature type="binding site" evidence="3">
    <location>
        <position position="22"/>
    </location>
    <ligand>
        <name>Cu(2+)</name>
        <dbReference type="ChEBI" id="CHEBI:29036"/>
        <note>catalytic</note>
    </ligand>
</feature>
<feature type="binding site" evidence="3">
    <location>
        <position position="107"/>
    </location>
    <ligand>
        <name>Cu(2+)</name>
        <dbReference type="ChEBI" id="CHEBI:29036"/>
        <note>catalytic</note>
    </ligand>
</feature>
<feature type="binding site" evidence="2">
    <location>
        <position position="190"/>
    </location>
    <ligand>
        <name>O2</name>
        <dbReference type="ChEBI" id="CHEBI:15379"/>
    </ligand>
</feature>
<feature type="binding site" evidence="3">
    <location>
        <position position="192"/>
    </location>
    <ligand>
        <name>Cu(2+)</name>
        <dbReference type="ChEBI" id="CHEBI:29036"/>
        <note>catalytic</note>
    </ligand>
</feature>
<feature type="glycosylation site" description="N-linked (GlcNAc...) asparagine" evidence="5">
    <location>
        <position position="58"/>
    </location>
</feature>
<feature type="glycosylation site" description="N-linked (GlcNAc...) asparagine" evidence="5">
    <location>
        <position position="203"/>
    </location>
</feature>
<feature type="disulfide bond" evidence="3">
    <location>
        <begin position="77"/>
        <end position="195"/>
    </location>
</feature>
<gene>
    <name evidence="6" type="primary">LPMO9G</name>
    <name evidence="6" type="synonym">AA9G</name>
</gene>
<organism>
    <name type="scientific">Malbranchea cinnamomea</name>
    <name type="common">Thermophilic fungus</name>
    <name type="synonym">Malbranchea sulfurea</name>
    <dbReference type="NCBI Taxonomy" id="5041"/>
    <lineage>
        <taxon>Eukaryota</taxon>
        <taxon>Fungi</taxon>
        <taxon>Dikarya</taxon>
        <taxon>Ascomycota</taxon>
        <taxon>Pezizomycotina</taxon>
        <taxon>Eurotiomycetes</taxon>
        <taxon>Eurotiomycetidae</taxon>
        <taxon>Onygenales</taxon>
        <taxon>Malbrancheaceae</taxon>
        <taxon>Malbranchea</taxon>
    </lineage>
</organism>
<sequence>MLPNAAGLLVAGVVSLSGVAAHGHVSKIFLDGQEYGGWIADVYPYMPEPPETIGWPTNVTDNGFVSPDRFSSPEIICHRGGVPSAISAPVSAGGTVELEWSTWPESHHGPVLNYLAKVDGDFSDIGPSTLQFFKFDETGLVSGSNPGYWGTDVMLANGRRYSMMIPSTIAPGKYVLRHELVALQNVGAAQLYPQCINIEVTSNTTGGDVNPGGTPATELYSPADPGFLFNIYEQYDSYPIPGQDVFRD</sequence>
<comment type="function">
    <text evidence="1">Lytic polysaccharide monooxygenase (LPMO) that depolymerizes crystalline and amorphous polysaccharides via the oxidation of scissile alpha- or beta-(1-4)-glycosidic bonds, yielding C1 or C4 oxidation products (By similarity). Catalysis by LPMOs requires the reduction of the active-site copper from Cu(II) to Cu(I) by a reducing agent and H(2)O(2) or O(2) as a cosubstrate (By similarity).</text>
</comment>
<comment type="catalytic activity">
    <reaction evidence="3">
        <text>[(1-&gt;4)-beta-D-glucosyl]n+m + reduced acceptor + O2 = 4-dehydro-beta-D-glucosyl-[(1-&gt;4)-beta-D-glucosyl]n-1 + [(1-&gt;4)-beta-D-glucosyl]m + acceptor + H2O.</text>
        <dbReference type="EC" id="1.14.99.56"/>
    </reaction>
</comment>
<comment type="cofactor">
    <cofactor evidence="2">
        <name>Cu(2+)</name>
        <dbReference type="ChEBI" id="CHEBI:29036"/>
    </cofactor>
    <text evidence="2">Binds 1 copper ion per subunit.</text>
</comment>
<comment type="subcellular location">
    <subcellularLocation>
        <location evidence="8">Secreted</location>
    </subcellularLocation>
</comment>
<comment type="biotechnology">
    <text evidence="1">Lignocellulose is the most abundant polymeric composite on Earth and is a recalcitrant but promising renewable substrate for industrial biotechnology applications. Together with cellobiose dehydrogenases (CDHs) an enzymatic system capable of oxidative cellulose cleavage is formed, which increases the efficiency of cellulases and put LPMOs at focus of biofuel research.</text>
</comment>
<comment type="similarity">
    <text evidence="7">Belongs to the polysaccharide monooxygenase AA9 family.</text>
</comment>
<accession>A0A5J6BJP2</accession>